<gene>
    <name evidence="1" type="primary">coaA</name>
    <name type="ordered locus">YPTS_0292</name>
</gene>
<reference key="1">
    <citation type="submission" date="2008-04" db="EMBL/GenBank/DDBJ databases">
        <title>Complete sequence of Yersinia pseudotuberculosis PB1/+.</title>
        <authorList>
            <person name="Copeland A."/>
            <person name="Lucas S."/>
            <person name="Lapidus A."/>
            <person name="Glavina del Rio T."/>
            <person name="Dalin E."/>
            <person name="Tice H."/>
            <person name="Bruce D."/>
            <person name="Goodwin L."/>
            <person name="Pitluck S."/>
            <person name="Munk A.C."/>
            <person name="Brettin T."/>
            <person name="Detter J.C."/>
            <person name="Han C."/>
            <person name="Tapia R."/>
            <person name="Schmutz J."/>
            <person name="Larimer F."/>
            <person name="Land M."/>
            <person name="Hauser L."/>
            <person name="Challacombe J.F."/>
            <person name="Green L."/>
            <person name="Lindler L.E."/>
            <person name="Nikolich M.P."/>
            <person name="Richardson P."/>
        </authorList>
    </citation>
    <scope>NUCLEOTIDE SEQUENCE [LARGE SCALE GENOMIC DNA]</scope>
    <source>
        <strain>PB1/+</strain>
    </source>
</reference>
<proteinExistence type="inferred from homology"/>
<comment type="catalytic activity">
    <reaction evidence="1">
        <text>(R)-pantothenate + ATP = (R)-4'-phosphopantothenate + ADP + H(+)</text>
        <dbReference type="Rhea" id="RHEA:16373"/>
        <dbReference type="ChEBI" id="CHEBI:10986"/>
        <dbReference type="ChEBI" id="CHEBI:15378"/>
        <dbReference type="ChEBI" id="CHEBI:29032"/>
        <dbReference type="ChEBI" id="CHEBI:30616"/>
        <dbReference type="ChEBI" id="CHEBI:456216"/>
        <dbReference type="EC" id="2.7.1.33"/>
    </reaction>
</comment>
<comment type="pathway">
    <text evidence="1">Cofactor biosynthesis; coenzyme A biosynthesis; CoA from (R)-pantothenate: step 1/5.</text>
</comment>
<comment type="subcellular location">
    <subcellularLocation>
        <location evidence="1">Cytoplasm</location>
    </subcellularLocation>
</comment>
<comment type="similarity">
    <text evidence="1">Belongs to the prokaryotic pantothenate kinase family.</text>
</comment>
<accession>B2K103</accession>
<name>COAA_YERPB</name>
<feature type="chain" id="PRO_1000099960" description="Pantothenate kinase">
    <location>
        <begin position="1"/>
        <end position="316"/>
    </location>
</feature>
<feature type="binding site" evidence="1">
    <location>
        <begin position="95"/>
        <end position="102"/>
    </location>
    <ligand>
        <name>ATP</name>
        <dbReference type="ChEBI" id="CHEBI:30616"/>
    </ligand>
</feature>
<dbReference type="EC" id="2.7.1.33" evidence="1"/>
<dbReference type="EMBL" id="CP001048">
    <property type="protein sequence ID" value="ACC87285.1"/>
    <property type="molecule type" value="Genomic_DNA"/>
</dbReference>
<dbReference type="RefSeq" id="WP_002212290.1">
    <property type="nucleotide sequence ID" value="NZ_CP009780.1"/>
</dbReference>
<dbReference type="SMR" id="B2K103"/>
<dbReference type="GeneID" id="57974956"/>
<dbReference type="KEGG" id="ypb:YPTS_0292"/>
<dbReference type="PATRIC" id="fig|502801.10.peg.3969"/>
<dbReference type="UniPathway" id="UPA00241">
    <property type="reaction ID" value="UER00352"/>
</dbReference>
<dbReference type="GO" id="GO:0005737">
    <property type="term" value="C:cytoplasm"/>
    <property type="evidence" value="ECO:0007669"/>
    <property type="project" value="UniProtKB-SubCell"/>
</dbReference>
<dbReference type="GO" id="GO:0005524">
    <property type="term" value="F:ATP binding"/>
    <property type="evidence" value="ECO:0007669"/>
    <property type="project" value="UniProtKB-UniRule"/>
</dbReference>
<dbReference type="GO" id="GO:0004594">
    <property type="term" value="F:pantothenate kinase activity"/>
    <property type="evidence" value="ECO:0007669"/>
    <property type="project" value="UniProtKB-UniRule"/>
</dbReference>
<dbReference type="GO" id="GO:0015937">
    <property type="term" value="P:coenzyme A biosynthetic process"/>
    <property type="evidence" value="ECO:0007669"/>
    <property type="project" value="UniProtKB-UniRule"/>
</dbReference>
<dbReference type="CDD" id="cd02025">
    <property type="entry name" value="PanK"/>
    <property type="match status" value="1"/>
</dbReference>
<dbReference type="FunFam" id="3.40.50.300:FF:000242">
    <property type="entry name" value="Pantothenate kinase"/>
    <property type="match status" value="1"/>
</dbReference>
<dbReference type="Gene3D" id="3.40.50.300">
    <property type="entry name" value="P-loop containing nucleotide triphosphate hydrolases"/>
    <property type="match status" value="1"/>
</dbReference>
<dbReference type="HAMAP" id="MF_00215">
    <property type="entry name" value="Pantothen_kinase_1"/>
    <property type="match status" value="1"/>
</dbReference>
<dbReference type="InterPro" id="IPR027417">
    <property type="entry name" value="P-loop_NTPase"/>
</dbReference>
<dbReference type="InterPro" id="IPR004566">
    <property type="entry name" value="PanK"/>
</dbReference>
<dbReference type="InterPro" id="IPR006083">
    <property type="entry name" value="PRK/URK"/>
</dbReference>
<dbReference type="NCBIfam" id="TIGR00554">
    <property type="entry name" value="panK_bact"/>
    <property type="match status" value="1"/>
</dbReference>
<dbReference type="PANTHER" id="PTHR10285">
    <property type="entry name" value="URIDINE KINASE"/>
    <property type="match status" value="1"/>
</dbReference>
<dbReference type="Pfam" id="PF00485">
    <property type="entry name" value="PRK"/>
    <property type="match status" value="1"/>
</dbReference>
<dbReference type="PIRSF" id="PIRSF000545">
    <property type="entry name" value="Pantothenate_kin"/>
    <property type="match status" value="1"/>
</dbReference>
<dbReference type="SUPFAM" id="SSF52540">
    <property type="entry name" value="P-loop containing nucleoside triphosphate hydrolases"/>
    <property type="match status" value="1"/>
</dbReference>
<keyword id="KW-0067">ATP-binding</keyword>
<keyword id="KW-0173">Coenzyme A biosynthesis</keyword>
<keyword id="KW-0963">Cytoplasm</keyword>
<keyword id="KW-0418">Kinase</keyword>
<keyword id="KW-0547">Nucleotide-binding</keyword>
<keyword id="KW-0808">Transferase</keyword>
<protein>
    <recommendedName>
        <fullName evidence="1">Pantothenate kinase</fullName>
        <ecNumber evidence="1">2.7.1.33</ecNumber>
    </recommendedName>
    <alternativeName>
        <fullName evidence="1">Pantothenic acid kinase</fullName>
    </alternativeName>
</protein>
<sequence>MTKREQSLATPYLQFDRTQWAALRDSVPLTLTEEEIVKLKGINEDLSLDEVAQIYLPLSRLLNFYISSNLRRQAVLEQFLGTDGQRIPYVIGIAGSVAVGKSTTARLLQALLSRWPEHRSVELITTDGFLHPNKVLNERGLMKKKGFPESYDMHNLVKFVSEVKSGADYVTAPVYSHLIYDVVPDGNKVIKQPDILILEGLNVLQSGMDYPHDPHHVFVSDFVDFSIYVDAPEDLLQSWYINRFLKFRQGAFSNPDSYFHNYAKLPETEAIKIATQLWNEINGLNLKQNILPTRERASLIMTKSANHAVESVRLRK</sequence>
<evidence type="ECO:0000255" key="1">
    <source>
        <dbReference type="HAMAP-Rule" id="MF_00215"/>
    </source>
</evidence>
<organism>
    <name type="scientific">Yersinia pseudotuberculosis serotype IB (strain PB1/+)</name>
    <dbReference type="NCBI Taxonomy" id="502801"/>
    <lineage>
        <taxon>Bacteria</taxon>
        <taxon>Pseudomonadati</taxon>
        <taxon>Pseudomonadota</taxon>
        <taxon>Gammaproteobacteria</taxon>
        <taxon>Enterobacterales</taxon>
        <taxon>Yersiniaceae</taxon>
        <taxon>Yersinia</taxon>
    </lineage>
</organism>